<organism>
    <name type="scientific">Staphylococcus aureus (strain MSSA476)</name>
    <dbReference type="NCBI Taxonomy" id="282459"/>
    <lineage>
        <taxon>Bacteria</taxon>
        <taxon>Bacillati</taxon>
        <taxon>Bacillota</taxon>
        <taxon>Bacilli</taxon>
        <taxon>Bacillales</taxon>
        <taxon>Staphylococcaceae</taxon>
        <taxon>Staphylococcus</taxon>
    </lineage>
</organism>
<protein>
    <recommendedName>
        <fullName>HTH-type transcriptional regulator SAS2464</fullName>
    </recommendedName>
</protein>
<sequence length="185" mass="22332">MRKDAKENRQRIEEIAHKLFDEEGVENISMNRIAKELGIGMGTLYRHFKDKSDLCYYVIQRDLDIFITHFKQIKDDYHSNYEVMQVSLDYLLQFKIDNKALLQCIEAGNNKLRFYQSAFYQELFDFYYDLFKSDDDTYTKFKTDMLLQSLSTSVFAFQIEHRHISIEAYRNYLLNIYLDEVERND</sequence>
<proteinExistence type="predicted"/>
<gene>
    <name type="ordered locus">SAS2464</name>
</gene>
<name>Y2464_STAAS</name>
<evidence type="ECO:0000255" key="1">
    <source>
        <dbReference type="PROSITE-ProRule" id="PRU00335"/>
    </source>
</evidence>
<accession>Q6G696</accession>
<keyword id="KW-0238">DNA-binding</keyword>
<keyword id="KW-0804">Transcription</keyword>
<keyword id="KW-0805">Transcription regulation</keyword>
<feature type="chain" id="PRO_0000286692" description="HTH-type transcriptional regulator SAS2464">
    <location>
        <begin position="1"/>
        <end position="185"/>
    </location>
</feature>
<feature type="domain" description="HTH tetR-type" evidence="1">
    <location>
        <begin position="6"/>
        <end position="66"/>
    </location>
</feature>
<feature type="DNA-binding region" description="H-T-H motif" evidence="1">
    <location>
        <begin position="29"/>
        <end position="48"/>
    </location>
</feature>
<reference key="1">
    <citation type="journal article" date="2004" name="Proc. Natl. Acad. Sci. U.S.A.">
        <title>Complete genomes of two clinical Staphylococcus aureus strains: evidence for the rapid evolution of virulence and drug resistance.</title>
        <authorList>
            <person name="Holden M.T.G."/>
            <person name="Feil E.J."/>
            <person name="Lindsay J.A."/>
            <person name="Peacock S.J."/>
            <person name="Day N.P.J."/>
            <person name="Enright M.C."/>
            <person name="Foster T.J."/>
            <person name="Moore C.E."/>
            <person name="Hurst L."/>
            <person name="Atkin R."/>
            <person name="Barron A."/>
            <person name="Bason N."/>
            <person name="Bentley S.D."/>
            <person name="Chillingworth C."/>
            <person name="Chillingworth T."/>
            <person name="Churcher C."/>
            <person name="Clark L."/>
            <person name="Corton C."/>
            <person name="Cronin A."/>
            <person name="Doggett J."/>
            <person name="Dowd L."/>
            <person name="Feltwell T."/>
            <person name="Hance Z."/>
            <person name="Harris B."/>
            <person name="Hauser H."/>
            <person name="Holroyd S."/>
            <person name="Jagels K."/>
            <person name="James K.D."/>
            <person name="Lennard N."/>
            <person name="Line A."/>
            <person name="Mayes R."/>
            <person name="Moule S."/>
            <person name="Mungall K."/>
            <person name="Ormond D."/>
            <person name="Quail M.A."/>
            <person name="Rabbinowitsch E."/>
            <person name="Rutherford K.M."/>
            <person name="Sanders M."/>
            <person name="Sharp S."/>
            <person name="Simmonds M."/>
            <person name="Stevens K."/>
            <person name="Whitehead S."/>
            <person name="Barrell B.G."/>
            <person name="Spratt B.G."/>
            <person name="Parkhill J."/>
        </authorList>
    </citation>
    <scope>NUCLEOTIDE SEQUENCE [LARGE SCALE GENOMIC DNA]</scope>
    <source>
        <strain>MSSA476</strain>
    </source>
</reference>
<dbReference type="EMBL" id="BX571857">
    <property type="protein sequence ID" value="CAG44280.1"/>
    <property type="molecule type" value="Genomic_DNA"/>
</dbReference>
<dbReference type="RefSeq" id="WP_001224187.1">
    <property type="nucleotide sequence ID" value="NC_002953.3"/>
</dbReference>
<dbReference type="SMR" id="Q6G696"/>
<dbReference type="KEGG" id="sas:SAS2464"/>
<dbReference type="HOGENOM" id="CLU_069356_17_2_9"/>
<dbReference type="GO" id="GO:0003677">
    <property type="term" value="F:DNA binding"/>
    <property type="evidence" value="ECO:0007669"/>
    <property type="project" value="UniProtKB-KW"/>
</dbReference>
<dbReference type="Gene3D" id="1.10.357.10">
    <property type="entry name" value="Tetracycline Repressor, domain 2"/>
    <property type="match status" value="1"/>
</dbReference>
<dbReference type="InterPro" id="IPR023772">
    <property type="entry name" value="DNA-bd_HTH_TetR-type_CS"/>
</dbReference>
<dbReference type="InterPro" id="IPR009057">
    <property type="entry name" value="Homeodomain-like_sf"/>
</dbReference>
<dbReference type="InterPro" id="IPR050624">
    <property type="entry name" value="HTH-type_Tx_Regulator"/>
</dbReference>
<dbReference type="InterPro" id="IPR001647">
    <property type="entry name" value="HTH_TetR"/>
</dbReference>
<dbReference type="PANTHER" id="PTHR43479">
    <property type="entry name" value="ACREF/ENVCD OPERON REPRESSOR-RELATED"/>
    <property type="match status" value="1"/>
</dbReference>
<dbReference type="PANTHER" id="PTHR43479:SF11">
    <property type="entry name" value="ACREF_ENVCD OPERON REPRESSOR-RELATED"/>
    <property type="match status" value="1"/>
</dbReference>
<dbReference type="Pfam" id="PF00440">
    <property type="entry name" value="TetR_N"/>
    <property type="match status" value="1"/>
</dbReference>
<dbReference type="PRINTS" id="PR00455">
    <property type="entry name" value="HTHTETR"/>
</dbReference>
<dbReference type="SUPFAM" id="SSF46689">
    <property type="entry name" value="Homeodomain-like"/>
    <property type="match status" value="1"/>
</dbReference>
<dbReference type="PROSITE" id="PS01081">
    <property type="entry name" value="HTH_TETR_1"/>
    <property type="match status" value="1"/>
</dbReference>
<dbReference type="PROSITE" id="PS50977">
    <property type="entry name" value="HTH_TETR_2"/>
    <property type="match status" value="1"/>
</dbReference>